<dbReference type="EMBL" id="U81162">
    <property type="protein sequence ID" value="AAB51240.1"/>
    <property type="molecule type" value="mRNA"/>
</dbReference>
<dbReference type="SMR" id="O04011"/>
<dbReference type="GlyCosmos" id="O04011">
    <property type="glycosylation" value="1 site, No reported glycans"/>
</dbReference>
<dbReference type="eggNOG" id="ENOG502QT7C">
    <property type="taxonomic scope" value="Eukaryota"/>
</dbReference>
<dbReference type="GO" id="GO:0048046">
    <property type="term" value="C:apoplast"/>
    <property type="evidence" value="ECO:0007669"/>
    <property type="project" value="UniProtKB-SubCell"/>
</dbReference>
<dbReference type="GO" id="GO:0030145">
    <property type="term" value="F:manganese ion binding"/>
    <property type="evidence" value="ECO:0007669"/>
    <property type="project" value="InterPro"/>
</dbReference>
<dbReference type="GO" id="GO:0009734">
    <property type="term" value="P:auxin-activated signaling pathway"/>
    <property type="evidence" value="ECO:0007669"/>
    <property type="project" value="UniProtKB-KW"/>
</dbReference>
<dbReference type="CDD" id="cd02241">
    <property type="entry name" value="cupin_OxOx"/>
    <property type="match status" value="1"/>
</dbReference>
<dbReference type="FunFam" id="2.60.120.10:FF:000047">
    <property type="entry name" value="Auxin-binding protein ABP19a"/>
    <property type="match status" value="1"/>
</dbReference>
<dbReference type="Gene3D" id="2.60.120.10">
    <property type="entry name" value="Jelly Rolls"/>
    <property type="match status" value="1"/>
</dbReference>
<dbReference type="InterPro" id="IPR006045">
    <property type="entry name" value="Cupin_1"/>
</dbReference>
<dbReference type="InterPro" id="IPR001929">
    <property type="entry name" value="Germin"/>
</dbReference>
<dbReference type="InterPro" id="IPR019780">
    <property type="entry name" value="Germin_Mn-BS"/>
</dbReference>
<dbReference type="InterPro" id="IPR014710">
    <property type="entry name" value="RmlC-like_jellyroll"/>
</dbReference>
<dbReference type="InterPro" id="IPR011051">
    <property type="entry name" value="RmlC_Cupin_sf"/>
</dbReference>
<dbReference type="PANTHER" id="PTHR31238">
    <property type="entry name" value="GERMIN-LIKE PROTEIN SUBFAMILY 3 MEMBER 3"/>
    <property type="match status" value="1"/>
</dbReference>
<dbReference type="Pfam" id="PF00190">
    <property type="entry name" value="Cupin_1"/>
    <property type="match status" value="1"/>
</dbReference>
<dbReference type="PRINTS" id="PR00325">
    <property type="entry name" value="GERMIN"/>
</dbReference>
<dbReference type="SMART" id="SM00835">
    <property type="entry name" value="Cupin_1"/>
    <property type="match status" value="1"/>
</dbReference>
<dbReference type="SUPFAM" id="SSF51182">
    <property type="entry name" value="RmlC-like cupins"/>
    <property type="match status" value="1"/>
</dbReference>
<dbReference type="PROSITE" id="PS00725">
    <property type="entry name" value="GERMIN"/>
    <property type="match status" value="1"/>
</dbReference>
<keyword id="KW-0052">Apoplast</keyword>
<keyword id="KW-0927">Auxin signaling pathway</keyword>
<keyword id="KW-0134">Cell wall</keyword>
<keyword id="KW-1015">Disulfide bond</keyword>
<keyword id="KW-0325">Glycoprotein</keyword>
<keyword id="KW-0464">Manganese</keyword>
<keyword id="KW-0479">Metal-binding</keyword>
<keyword id="KW-0675">Receptor</keyword>
<keyword id="KW-0964">Secreted</keyword>
<keyword id="KW-0732">Signal</keyword>
<proteinExistence type="evidence at transcript level"/>
<name>ABP20_PRUPE</name>
<protein>
    <recommendedName>
        <fullName>Auxin-binding protein ABP20</fullName>
    </recommendedName>
</protein>
<sequence>MPQATMIFPILFTFFLLLSSSNAAVQDFCVADLAAPEGPAGFSCKKPASVKVNDFVFSGLGIAGNTSNIIKAAVTPAFVAQFPGVNGLGISIARLDLAVGGVVPFHTHPGASEVLIVAQGTICAGFVASDNTPYLQTLEKGDIMVFPQGLLHFQVNGGEAPALAFASFGSASPGLQILDFALFKNDLPTEVIAQTTFLDAAQIKKLKGVLGGTN</sequence>
<comment type="function">
    <text>Probable receptor for the plant growth-promoting hormone auxin.</text>
</comment>
<comment type="subunit">
    <text>Interacts with ABP19.</text>
</comment>
<comment type="subcellular location">
    <subcellularLocation>
        <location>Secreted</location>
        <location>Extracellular space</location>
        <location>Apoplast</location>
    </subcellularLocation>
    <subcellularLocation>
        <location>Secreted</location>
        <location>Cell wall</location>
    </subcellularLocation>
</comment>
<comment type="similarity">
    <text evidence="3">Belongs to the germin family.</text>
</comment>
<gene>
    <name type="primary">ABP20</name>
</gene>
<reference key="1">
    <citation type="journal article" date="1998" name="Plant Cell Physiol.">
        <title>Cloning of genes encoding auxin-binding proteins (ABP19/20) from peach: significant peptide sequence similarity with germin-like proteins.</title>
        <authorList>
            <person name="Ohmiya A."/>
            <person name="Tanaka Y."/>
            <person name="Kadowaki K."/>
            <person name="Hayashi T."/>
        </authorList>
    </citation>
    <scope>NUCLEOTIDE SEQUENCE [MRNA]</scope>
    <source>
        <strain>cv. Akatsuki</strain>
        <tissue>Shoot apex</tissue>
    </source>
</reference>
<accession>O04011</accession>
<feature type="signal peptide" evidence="2">
    <location>
        <begin position="1"/>
        <end position="23"/>
    </location>
</feature>
<feature type="chain" id="PRO_0000010845" description="Auxin-binding protein ABP20">
    <location>
        <begin position="24"/>
        <end position="214"/>
    </location>
</feature>
<feature type="domain" description="Cupin type-1" evidence="2">
    <location>
        <begin position="58"/>
        <end position="204"/>
    </location>
</feature>
<feature type="binding site" evidence="1">
    <location>
        <position position="106"/>
    </location>
    <ligand>
        <name>Mn(2+)</name>
        <dbReference type="ChEBI" id="CHEBI:29035"/>
    </ligand>
</feature>
<feature type="binding site" evidence="1">
    <location>
        <position position="108"/>
    </location>
    <ligand>
        <name>Mn(2+)</name>
        <dbReference type="ChEBI" id="CHEBI:29035"/>
    </ligand>
</feature>
<feature type="binding site" evidence="1">
    <location>
        <position position="113"/>
    </location>
    <ligand>
        <name>Mn(2+)</name>
        <dbReference type="ChEBI" id="CHEBI:29035"/>
    </ligand>
</feature>
<feature type="binding site" evidence="1">
    <location>
        <position position="152"/>
    </location>
    <ligand>
        <name>Mn(2+)</name>
        <dbReference type="ChEBI" id="CHEBI:29035"/>
    </ligand>
</feature>
<feature type="glycosylation site" description="N-linked (GlcNAc...) asparagine" evidence="2">
    <location>
        <position position="65"/>
    </location>
</feature>
<feature type="disulfide bond" evidence="1">
    <location>
        <begin position="29"/>
        <end position="44"/>
    </location>
</feature>
<evidence type="ECO:0000250" key="1"/>
<evidence type="ECO:0000255" key="2"/>
<evidence type="ECO:0000305" key="3"/>
<organism>
    <name type="scientific">Prunus persica</name>
    <name type="common">Peach</name>
    <name type="synonym">Amygdalus persica</name>
    <dbReference type="NCBI Taxonomy" id="3760"/>
    <lineage>
        <taxon>Eukaryota</taxon>
        <taxon>Viridiplantae</taxon>
        <taxon>Streptophyta</taxon>
        <taxon>Embryophyta</taxon>
        <taxon>Tracheophyta</taxon>
        <taxon>Spermatophyta</taxon>
        <taxon>Magnoliopsida</taxon>
        <taxon>eudicotyledons</taxon>
        <taxon>Gunneridae</taxon>
        <taxon>Pentapetalae</taxon>
        <taxon>rosids</taxon>
        <taxon>fabids</taxon>
        <taxon>Rosales</taxon>
        <taxon>Rosaceae</taxon>
        <taxon>Amygdaloideae</taxon>
        <taxon>Amygdaleae</taxon>
        <taxon>Prunus</taxon>
    </lineage>
</organism>